<evidence type="ECO:0000255" key="1"/>
<evidence type="ECO:0000269" key="2">
    <source>
    </source>
</evidence>
<evidence type="ECO:0000269" key="3">
    <source>
    </source>
</evidence>
<evidence type="ECO:0000269" key="4">
    <source>
    </source>
</evidence>
<evidence type="ECO:0000269" key="5">
    <source>
    </source>
</evidence>
<evidence type="ECO:0000269" key="6">
    <source>
    </source>
</evidence>
<evidence type="ECO:0000269" key="7">
    <source>
    </source>
</evidence>
<evidence type="ECO:0000303" key="8">
    <source>
    </source>
</evidence>
<evidence type="ECO:0000303" key="9">
    <source>
    </source>
</evidence>
<evidence type="ECO:0000303" key="10">
    <source>
    </source>
</evidence>
<evidence type="ECO:0000305" key="11"/>
<evidence type="ECO:0000312" key="12">
    <source>
        <dbReference type="EMBL" id="BAD15544.1"/>
    </source>
</evidence>
<evidence type="ECO:0000312" key="13">
    <source>
        <dbReference type="EMBL" id="BAD16128.1"/>
    </source>
</evidence>
<evidence type="ECO:0000312" key="14">
    <source>
        <dbReference type="EMBL" id="BAS80898.1"/>
    </source>
</evidence>
<evidence type="ECO:0000312" key="15">
    <source>
        <dbReference type="EMBL" id="EAZ24602.1"/>
    </source>
</evidence>
<evidence type="ECO:0007829" key="16">
    <source>
        <dbReference type="PDB" id="7CJS"/>
    </source>
</evidence>
<evidence type="ECO:0007829" key="17">
    <source>
        <dbReference type="PDB" id="7NL4"/>
    </source>
</evidence>
<dbReference type="EMBL" id="AB222272">
    <property type="protein sequence ID" value="BAE92561.1"/>
    <property type="molecule type" value="mRNA"/>
</dbReference>
<dbReference type="EMBL" id="KT284741">
    <property type="protein sequence ID" value="ALS20398.1"/>
    <property type="molecule type" value="mRNA"/>
</dbReference>
<dbReference type="EMBL" id="KT284742">
    <property type="protein sequence ID" value="ALS20399.1"/>
    <property type="molecule type" value="mRNA"/>
</dbReference>
<dbReference type="EMBL" id="AP004114">
    <property type="protein sequence ID" value="BAD15544.1"/>
    <property type="molecule type" value="Genomic_DNA"/>
</dbReference>
<dbReference type="EMBL" id="AP005297">
    <property type="protein sequence ID" value="BAD16128.1"/>
    <property type="molecule type" value="Genomic_DNA"/>
</dbReference>
<dbReference type="EMBL" id="AP008208">
    <property type="protein sequence ID" value="BAF10022.1"/>
    <property type="molecule type" value="Genomic_DNA"/>
</dbReference>
<dbReference type="EMBL" id="AP014958">
    <property type="protein sequence ID" value="BAS80898.1"/>
    <property type="molecule type" value="Genomic_DNA"/>
</dbReference>
<dbReference type="EMBL" id="CM000139">
    <property type="protein sequence ID" value="EAZ24602.1"/>
    <property type="molecule type" value="Genomic_DNA"/>
</dbReference>
<dbReference type="EMBL" id="AK069842">
    <property type="protein sequence ID" value="BAG91632.1"/>
    <property type="molecule type" value="mRNA"/>
</dbReference>
<dbReference type="RefSeq" id="XP_015626173.1">
    <property type="nucleotide sequence ID" value="XM_015770687.1"/>
</dbReference>
<dbReference type="PDB" id="7CJS">
    <property type="method" value="X-ray"/>
    <property type="resolution" value="1.80 A"/>
    <property type="chains" value="A/B/C/D/E/F/G/H=47-298"/>
</dbReference>
<dbReference type="PDB" id="7NL4">
    <property type="method" value="X-ray"/>
    <property type="resolution" value="3.00 A"/>
    <property type="chains" value="A/B/C/D/E/F/G/H=38-264"/>
</dbReference>
<dbReference type="PDBsum" id="7CJS"/>
<dbReference type="PDBsum" id="7NL4"/>
<dbReference type="SMR" id="Q6Z2T3"/>
<dbReference type="FunCoup" id="Q6Z2T3">
    <property type="interactions" value="15"/>
</dbReference>
<dbReference type="STRING" id="39947.Q6Z2T3"/>
<dbReference type="TCDB" id="1.A.8.12.2">
    <property type="family name" value="the major intrinsic protein (mip) family"/>
</dbReference>
<dbReference type="GlyCosmos" id="Q6Z2T3">
    <property type="glycosylation" value="3 sites, No reported glycans"/>
</dbReference>
<dbReference type="PaxDb" id="39947-Q6Z2T3"/>
<dbReference type="EnsemblPlants" id="Os02t0745100-01">
    <property type="protein sequence ID" value="Os02t0745100-01"/>
    <property type="gene ID" value="Os02g0745100"/>
</dbReference>
<dbReference type="Gramene" id="Os02t0745100-01">
    <property type="protein sequence ID" value="Os02t0745100-01"/>
    <property type="gene ID" value="Os02g0745100"/>
</dbReference>
<dbReference type="KEGG" id="dosa:Os02g0745100"/>
<dbReference type="eggNOG" id="KOG0223">
    <property type="taxonomic scope" value="Eukaryota"/>
</dbReference>
<dbReference type="HOGENOM" id="CLU_020019_3_1_1"/>
<dbReference type="InParanoid" id="Q6Z2T3"/>
<dbReference type="OMA" id="APSHKDM"/>
<dbReference type="OrthoDB" id="3222at2759"/>
<dbReference type="BioCyc" id="MetaCyc:MONOMER-21679"/>
<dbReference type="PlantReactome" id="R-OSA-9618218">
    <property type="pathway name" value="Arsenic uptake and detoxification"/>
</dbReference>
<dbReference type="Proteomes" id="UP000000763">
    <property type="component" value="Chromosome 2"/>
</dbReference>
<dbReference type="Proteomes" id="UP000007752">
    <property type="component" value="Chromosome 2"/>
</dbReference>
<dbReference type="Proteomes" id="UP000059680">
    <property type="component" value="Chromosome 2"/>
</dbReference>
<dbReference type="GO" id="GO:0048226">
    <property type="term" value="C:Casparian strip"/>
    <property type="evidence" value="ECO:0000314"/>
    <property type="project" value="Gramene"/>
</dbReference>
<dbReference type="GO" id="GO:0016020">
    <property type="term" value="C:membrane"/>
    <property type="evidence" value="ECO:0000314"/>
    <property type="project" value="Gramene"/>
</dbReference>
<dbReference type="GO" id="GO:0005886">
    <property type="term" value="C:plasma membrane"/>
    <property type="evidence" value="ECO:0007669"/>
    <property type="project" value="UniProtKB-SubCell"/>
</dbReference>
<dbReference type="GO" id="GO:0015267">
    <property type="term" value="F:channel activity"/>
    <property type="evidence" value="ECO:0007669"/>
    <property type="project" value="InterPro"/>
</dbReference>
<dbReference type="GO" id="GO:0015115">
    <property type="term" value="F:silicate transmembrane transporter activity"/>
    <property type="evidence" value="ECO:0000314"/>
    <property type="project" value="Gramene"/>
</dbReference>
<dbReference type="GO" id="GO:0015708">
    <property type="term" value="P:silicic acid import across plasma membrane"/>
    <property type="evidence" value="ECO:0000315"/>
    <property type="project" value="Gramene"/>
</dbReference>
<dbReference type="CDD" id="cd00333">
    <property type="entry name" value="MIP"/>
    <property type="match status" value="1"/>
</dbReference>
<dbReference type="FunFam" id="1.20.1080.10:FF:000013">
    <property type="entry name" value="Aquaporin NIP2-1"/>
    <property type="match status" value="1"/>
</dbReference>
<dbReference type="Gene3D" id="1.20.1080.10">
    <property type="entry name" value="Glycerol uptake facilitator protein"/>
    <property type="match status" value="1"/>
</dbReference>
<dbReference type="InterPro" id="IPR023271">
    <property type="entry name" value="Aquaporin-like"/>
</dbReference>
<dbReference type="InterPro" id="IPR034294">
    <property type="entry name" value="Aquaporin_transptr"/>
</dbReference>
<dbReference type="InterPro" id="IPR000425">
    <property type="entry name" value="MIP"/>
</dbReference>
<dbReference type="InterPro" id="IPR022357">
    <property type="entry name" value="MIP_CS"/>
</dbReference>
<dbReference type="PANTHER" id="PTHR45724">
    <property type="entry name" value="AQUAPORIN NIP2-1"/>
    <property type="match status" value="1"/>
</dbReference>
<dbReference type="PANTHER" id="PTHR45724:SF16">
    <property type="entry name" value="AQUAPORIN NIP2-1"/>
    <property type="match status" value="1"/>
</dbReference>
<dbReference type="Pfam" id="PF00230">
    <property type="entry name" value="MIP"/>
    <property type="match status" value="1"/>
</dbReference>
<dbReference type="PRINTS" id="PR00783">
    <property type="entry name" value="MINTRINSICP"/>
</dbReference>
<dbReference type="SUPFAM" id="SSF81338">
    <property type="entry name" value="Aquaporin-like"/>
    <property type="match status" value="1"/>
</dbReference>
<dbReference type="PROSITE" id="PS00221">
    <property type="entry name" value="MIP"/>
    <property type="match status" value="1"/>
</dbReference>
<comment type="function">
    <text evidence="3 4 6 7">Silicon influx transporter responsible for silicon transport from the external solution to the root cells (PubMed:16572174). Is coupled with the silicon efflux transporter LSI2 in both exodermal and endodermal root cells for an efficient silicon transport across the cells into the stele (PubMed:17625566). Silicon is beneficial to plant growth and helps plants to overcome abiotic and biotic stresses by preventing lodging (falling over) and increasing resistance to pests and diseases, as well as other stresses (PubMed:16572174). Is coupled with LSI2 transporter in roots for efficient uptake of arsenite, which is further dispatched in shoots and grains (PubMed:18626020). Mediates uptake of methylated arsenic species in roots (PubMed:19542298).</text>
</comment>
<comment type="subcellular location">
    <subcellularLocation>
        <location evidence="3">Cell membrane</location>
        <topology evidence="3">Multi-pass membrane protein</topology>
    </subcellularLocation>
</comment>
<comment type="tissue specificity">
    <text evidence="2 3 5">Mainly expressed in the roots (PubMed:16033806, PubMed:16572174, PubMed:17905867). In roots, it localizes in the main and lateral roots, but not in root hairs (PubMed:16572174). Within a root, it localizes on the plasma membrane of the distal side of both exodermis and endodermis, where casparian strips exist (at protein level) (PubMed:16572174, PubMed:17905867). Expressed low levels in leaves and anthers (PubMed:16033806).</text>
</comment>
<comment type="induction">
    <text evidence="3">Regulated by silicon level; the expression being decreased 4-fold by continuous silicon supply for 3 days.</text>
</comment>
<comment type="domain">
    <text>Aquaporins contain two tandem repeats each containing three membrane-spanning domains and a pore-forming loop with the signature motif Asn-Pro-Ala (NPA).</text>
</comment>
<comment type="similarity">
    <text evidence="11">Belongs to the MIP/aquaporin (TC 1.A.8) family. NIP (TC 1.A.8.12) subfamily.</text>
</comment>
<sequence>MASNNSRTNSRANYSNEIHDLSTVQNGTMPTMYYGEKAIADFFPPHLLKKVVSEVVATFLLVFMTCGAAGISGSDLSRISQLGQSIAGGLIVTVMIYAVGHISGAHMNPAVTLAFAVFRHFPWIQVPFYWAAQFTGAICASFVLKAVIHPVDVIGTTTPVGPHWHSLVVEVIVTFNMMFVTLAVATDTRAVGELAGLAVGSAVCITSIFAGAISGGSMNPARTLGPALASNKFDGLWIYFLGPVMGTLSGAWTYTFIRFEDTPKEGSSQKLSSFKLRRLRSQQSIAADDVDEMENIQV</sequence>
<name>NIP21_ORYSJ</name>
<protein>
    <recommendedName>
        <fullName evidence="11">Aquaporin NIP2-1</fullName>
    </recommendedName>
    <alternativeName>
        <fullName evidence="9">Low silicon protein 1</fullName>
    </alternativeName>
    <alternativeName>
        <fullName evidence="8">NOD26-like intrinsic protein 2-1</fullName>
    </alternativeName>
    <alternativeName>
        <fullName evidence="8">OsNIP2;1</fullName>
    </alternativeName>
    <alternativeName>
        <fullName evidence="10">Silicon influx transporter LSI1</fullName>
    </alternativeName>
</protein>
<proteinExistence type="evidence at protein level"/>
<gene>
    <name evidence="8" type="primary">NIP2-1</name>
    <name evidence="9" type="synonym">LSI1</name>
    <name evidence="10" type="synonym">SIIT1</name>
    <name evidence="14" type="ordered locus">Os02g0745100</name>
    <name evidence="11" type="ordered locus">LOC_Os02g51110</name>
    <name evidence="12" type="ORF">OJ1118_G04.16</name>
    <name evidence="13" type="ORF">OJ1734_E02.43</name>
    <name evidence="15" type="ORF">OsJ_008085</name>
</gene>
<keyword id="KW-0002">3D-structure</keyword>
<keyword id="KW-1003">Cell membrane</keyword>
<keyword id="KW-0325">Glycoprotein</keyword>
<keyword id="KW-0472">Membrane</keyword>
<keyword id="KW-1185">Reference proteome</keyword>
<keyword id="KW-0677">Repeat</keyword>
<keyword id="KW-0812">Transmembrane</keyword>
<keyword id="KW-1133">Transmembrane helix</keyword>
<keyword id="KW-0813">Transport</keyword>
<accession>Q6Z2T3</accession>
<accession>B7EGY5</accession>
<accession>Q0DXL6</accession>
<feature type="chain" id="PRO_0000235239" description="Aquaporin NIP2-1">
    <location>
        <begin position="1"/>
        <end position="298"/>
    </location>
</feature>
<feature type="transmembrane region" description="Helical; Name=1" evidence="1">
    <location>
        <begin position="51"/>
        <end position="71"/>
    </location>
</feature>
<feature type="transmembrane region" description="Helical; Name=2" evidence="1">
    <location>
        <begin position="85"/>
        <end position="105"/>
    </location>
</feature>
<feature type="transmembrane region" description="Helical; Name=3" evidence="1">
    <location>
        <begin position="124"/>
        <end position="144"/>
    </location>
</feature>
<feature type="transmembrane region" description="Helical; Name=4" evidence="1">
    <location>
        <begin position="166"/>
        <end position="186"/>
    </location>
</feature>
<feature type="transmembrane region" description="Helical; Name=5" evidence="1">
    <location>
        <begin position="194"/>
        <end position="214"/>
    </location>
</feature>
<feature type="transmembrane region" description="Helical; Name=6" evidence="1">
    <location>
        <begin position="237"/>
        <end position="257"/>
    </location>
</feature>
<feature type="short sequence motif" description="NPA 1">
    <location>
        <begin position="108"/>
        <end position="110"/>
    </location>
</feature>
<feature type="short sequence motif" description="NPA 2">
    <location>
        <begin position="219"/>
        <end position="221"/>
    </location>
</feature>
<feature type="glycosylation site" description="N-linked (GlcNAc...) asparagine" evidence="1">
    <location>
        <position position="4"/>
    </location>
</feature>
<feature type="glycosylation site" description="N-linked (GlcNAc...) asparagine" evidence="1">
    <location>
        <position position="13"/>
    </location>
</feature>
<feature type="glycosylation site" description="N-linked (GlcNAc...) asparagine" evidence="1">
    <location>
        <position position="26"/>
    </location>
</feature>
<feature type="mutagenesis site" description="In lsi; impairs silicon uptake. Grain discoloration. Reduces grain yield 10-fold." evidence="3">
    <original>A</original>
    <variation>T</variation>
    <location>
        <position position="132"/>
    </location>
</feature>
<feature type="helix" evidence="16">
    <location>
        <begin position="47"/>
        <end position="74"/>
    </location>
</feature>
<feature type="turn" evidence="16">
    <location>
        <begin position="76"/>
        <end position="78"/>
    </location>
</feature>
<feature type="helix" evidence="16">
    <location>
        <begin position="81"/>
        <end position="99"/>
    </location>
</feature>
<feature type="turn" evidence="16">
    <location>
        <begin position="100"/>
        <end position="102"/>
    </location>
</feature>
<feature type="helix" evidence="16">
    <location>
        <begin position="109"/>
        <end position="117"/>
    </location>
</feature>
<feature type="helix" evidence="16">
    <location>
        <begin position="123"/>
        <end position="125"/>
    </location>
</feature>
<feature type="helix" evidence="16">
    <location>
        <begin position="126"/>
        <end position="147"/>
    </location>
</feature>
<feature type="turn" evidence="16">
    <location>
        <begin position="148"/>
        <end position="150"/>
    </location>
</feature>
<feature type="helix" evidence="16">
    <location>
        <begin position="163"/>
        <end position="186"/>
    </location>
</feature>
<feature type="strand" evidence="17">
    <location>
        <begin position="187"/>
        <end position="190"/>
    </location>
</feature>
<feature type="helix" evidence="16">
    <location>
        <begin position="192"/>
        <end position="194"/>
    </location>
</feature>
<feature type="helix" evidence="16">
    <location>
        <begin position="195"/>
        <end position="209"/>
    </location>
</feature>
<feature type="helix" evidence="16">
    <location>
        <begin position="210"/>
        <end position="212"/>
    </location>
</feature>
<feature type="helix" evidence="16">
    <location>
        <begin position="220"/>
        <end position="230"/>
    </location>
</feature>
<feature type="turn" evidence="16">
    <location>
        <begin position="234"/>
        <end position="237"/>
    </location>
</feature>
<feature type="helix" evidence="16">
    <location>
        <begin position="238"/>
        <end position="257"/>
    </location>
</feature>
<organism>
    <name type="scientific">Oryza sativa subsp. japonica</name>
    <name type="common">Rice</name>
    <dbReference type="NCBI Taxonomy" id="39947"/>
    <lineage>
        <taxon>Eukaryota</taxon>
        <taxon>Viridiplantae</taxon>
        <taxon>Streptophyta</taxon>
        <taxon>Embryophyta</taxon>
        <taxon>Tracheophyta</taxon>
        <taxon>Spermatophyta</taxon>
        <taxon>Magnoliopsida</taxon>
        <taxon>Liliopsida</taxon>
        <taxon>Poales</taxon>
        <taxon>Poaceae</taxon>
        <taxon>BOP clade</taxon>
        <taxon>Oryzoideae</taxon>
        <taxon>Oryzeae</taxon>
        <taxon>Oryzinae</taxon>
        <taxon>Oryza</taxon>
        <taxon>Oryza sativa</taxon>
    </lineage>
</organism>
<reference key="1">
    <citation type="journal article" date="2006" name="Nature">
        <title>A silicon transporter in rice.</title>
        <authorList>
            <person name="Ma J.F."/>
            <person name="Tamai K."/>
            <person name="Yamaji N."/>
            <person name="Mitani N."/>
            <person name="Konishi S."/>
            <person name="Katsuhara M."/>
            <person name="Ishiguro M."/>
            <person name="Murata Y."/>
            <person name="Yano M."/>
        </authorList>
    </citation>
    <scope>NUCLEOTIDE SEQUENCE [MRNA]</scope>
    <scope>FUNCTION</scope>
    <scope>SUBCELLULAR LOCATION</scope>
    <scope>TISSUE SPECIFICITY</scope>
    <scope>INDUCTION</scope>
    <scope>MUTAGENESIS OF ALA-132</scope>
</reference>
<reference key="2">
    <citation type="submission" date="2015-12" db="EMBL/GenBank/DDBJ databases">
        <title>Oryza sativa NOD26 major intrinsic protein (Lsi1) mRNA.</title>
        <authorList>
            <person name="Sahebi M."/>
            <person name="Hanafi M.M."/>
            <person name="Azizi P."/>
            <person name="Abiri R."/>
            <person name="Taheri S."/>
        </authorList>
    </citation>
    <scope>NUCLEOTIDE SEQUENCE [MRNA]</scope>
</reference>
<reference key="3">
    <citation type="journal article" date="2005" name="Nature">
        <title>The map-based sequence of the rice genome.</title>
        <authorList>
            <consortium name="International rice genome sequencing project (IRGSP)"/>
        </authorList>
    </citation>
    <scope>NUCLEOTIDE SEQUENCE [LARGE SCALE GENOMIC DNA]</scope>
    <source>
        <strain>cv. Nipponbare</strain>
    </source>
</reference>
<reference key="4">
    <citation type="journal article" date="2008" name="Nucleic Acids Res.">
        <title>The rice annotation project database (RAP-DB): 2008 update.</title>
        <authorList>
            <consortium name="The rice annotation project (RAP)"/>
        </authorList>
    </citation>
    <scope>GENOME REANNOTATION</scope>
    <source>
        <strain>cv. Nipponbare</strain>
    </source>
</reference>
<reference key="5">
    <citation type="journal article" date="2013" name="Rice">
        <title>Improvement of the Oryza sativa Nipponbare reference genome using next generation sequence and optical map data.</title>
        <authorList>
            <person name="Kawahara Y."/>
            <person name="de la Bastide M."/>
            <person name="Hamilton J.P."/>
            <person name="Kanamori H."/>
            <person name="McCombie W.R."/>
            <person name="Ouyang S."/>
            <person name="Schwartz D.C."/>
            <person name="Tanaka T."/>
            <person name="Wu J."/>
            <person name="Zhou S."/>
            <person name="Childs K.L."/>
            <person name="Davidson R.M."/>
            <person name="Lin H."/>
            <person name="Quesada-Ocampo L."/>
            <person name="Vaillancourt B."/>
            <person name="Sakai H."/>
            <person name="Lee S.S."/>
            <person name="Kim J."/>
            <person name="Numa H."/>
            <person name="Itoh T."/>
            <person name="Buell C.R."/>
            <person name="Matsumoto T."/>
        </authorList>
    </citation>
    <scope>GENOME REANNOTATION</scope>
    <source>
        <strain>cv. Nipponbare</strain>
    </source>
</reference>
<reference key="6">
    <citation type="journal article" date="2005" name="PLoS Biol.">
        <title>The genomes of Oryza sativa: a history of duplications.</title>
        <authorList>
            <person name="Yu J."/>
            <person name="Wang J."/>
            <person name="Lin W."/>
            <person name="Li S."/>
            <person name="Li H."/>
            <person name="Zhou J."/>
            <person name="Ni P."/>
            <person name="Dong W."/>
            <person name="Hu S."/>
            <person name="Zeng C."/>
            <person name="Zhang J."/>
            <person name="Zhang Y."/>
            <person name="Li R."/>
            <person name="Xu Z."/>
            <person name="Li S."/>
            <person name="Li X."/>
            <person name="Zheng H."/>
            <person name="Cong L."/>
            <person name="Lin L."/>
            <person name="Yin J."/>
            <person name="Geng J."/>
            <person name="Li G."/>
            <person name="Shi J."/>
            <person name="Liu J."/>
            <person name="Lv H."/>
            <person name="Li J."/>
            <person name="Wang J."/>
            <person name="Deng Y."/>
            <person name="Ran L."/>
            <person name="Shi X."/>
            <person name="Wang X."/>
            <person name="Wu Q."/>
            <person name="Li C."/>
            <person name="Ren X."/>
            <person name="Wang J."/>
            <person name="Wang X."/>
            <person name="Li D."/>
            <person name="Liu D."/>
            <person name="Zhang X."/>
            <person name="Ji Z."/>
            <person name="Zhao W."/>
            <person name="Sun Y."/>
            <person name="Zhang Z."/>
            <person name="Bao J."/>
            <person name="Han Y."/>
            <person name="Dong L."/>
            <person name="Ji J."/>
            <person name="Chen P."/>
            <person name="Wu S."/>
            <person name="Liu J."/>
            <person name="Xiao Y."/>
            <person name="Bu D."/>
            <person name="Tan J."/>
            <person name="Yang L."/>
            <person name="Ye C."/>
            <person name="Zhang J."/>
            <person name="Xu J."/>
            <person name="Zhou Y."/>
            <person name="Yu Y."/>
            <person name="Zhang B."/>
            <person name="Zhuang S."/>
            <person name="Wei H."/>
            <person name="Liu B."/>
            <person name="Lei M."/>
            <person name="Yu H."/>
            <person name="Li Y."/>
            <person name="Xu H."/>
            <person name="Wei S."/>
            <person name="He X."/>
            <person name="Fang L."/>
            <person name="Zhang Z."/>
            <person name="Zhang Y."/>
            <person name="Huang X."/>
            <person name="Su Z."/>
            <person name="Tong W."/>
            <person name="Li J."/>
            <person name="Tong Z."/>
            <person name="Li S."/>
            <person name="Ye J."/>
            <person name="Wang L."/>
            <person name="Fang L."/>
            <person name="Lei T."/>
            <person name="Chen C.-S."/>
            <person name="Chen H.-C."/>
            <person name="Xu Z."/>
            <person name="Li H."/>
            <person name="Huang H."/>
            <person name="Zhang F."/>
            <person name="Xu H."/>
            <person name="Li N."/>
            <person name="Zhao C."/>
            <person name="Li S."/>
            <person name="Dong L."/>
            <person name="Huang Y."/>
            <person name="Li L."/>
            <person name="Xi Y."/>
            <person name="Qi Q."/>
            <person name="Li W."/>
            <person name="Zhang B."/>
            <person name="Hu W."/>
            <person name="Zhang Y."/>
            <person name="Tian X."/>
            <person name="Jiao Y."/>
            <person name="Liang X."/>
            <person name="Jin J."/>
            <person name="Gao L."/>
            <person name="Zheng W."/>
            <person name="Hao B."/>
            <person name="Liu S.-M."/>
            <person name="Wang W."/>
            <person name="Yuan L."/>
            <person name="Cao M."/>
            <person name="McDermott J."/>
            <person name="Samudrala R."/>
            <person name="Wang J."/>
            <person name="Wong G.K.-S."/>
            <person name="Yang H."/>
        </authorList>
    </citation>
    <scope>NUCLEOTIDE SEQUENCE [LARGE SCALE GENOMIC DNA]</scope>
    <source>
        <strain>cv. Nipponbare</strain>
    </source>
</reference>
<reference key="7">
    <citation type="journal article" date="2003" name="Science">
        <title>Collection, mapping, and annotation of over 28,000 cDNA clones from japonica rice.</title>
        <authorList>
            <consortium name="The rice full-length cDNA consortium"/>
        </authorList>
    </citation>
    <scope>NUCLEOTIDE SEQUENCE [LARGE SCALE MRNA]</scope>
    <source>
        <strain>cv. Nipponbare</strain>
    </source>
</reference>
<reference key="8">
    <citation type="journal article" date="2005" name="Plant Cell Physiol.">
        <title>Identification of 33 rice aquaporin genes and analysis of their expression and function.</title>
        <authorList>
            <person name="Sakurai J."/>
            <person name="Ishikawa F."/>
            <person name="Yamaguchi T."/>
            <person name="Uemura M."/>
            <person name="Maeshima M."/>
        </authorList>
    </citation>
    <scope>NOMENCLATURE</scope>
    <scope>TISSUE SPECIFICITY</scope>
</reference>
<reference key="9">
    <citation type="journal article" date="2007" name="Nature">
        <title>An efflux transporter of silicon in rice.</title>
        <authorList>
            <person name="Ma J.F."/>
            <person name="Yamaji N."/>
            <person name="Mitani N."/>
            <person name="Tamai K."/>
            <person name="Konishi S."/>
            <person name="Fujiwara T."/>
            <person name="Katsuhara M."/>
            <person name="Yano M."/>
        </authorList>
    </citation>
    <scope>FUNCTION</scope>
</reference>
<reference key="10">
    <citation type="journal article" date="2007" name="Plant Physiol.">
        <title>Genotypic difference in silicon uptake and expression of silicon transporter genes in rice.</title>
        <authorList>
            <person name="Ma J.F."/>
            <person name="Yamaji N."/>
            <person name="Tamai K."/>
            <person name="Mitani N."/>
        </authorList>
    </citation>
    <scope>TISSUE SPECIFICITY</scope>
</reference>
<reference key="11">
    <citation type="journal article" date="2008" name="Proc. Natl. Acad. Sci. U.S.A.">
        <title>Transporters of arsenite in rice and their role in arsenic accumulation in rice grain.</title>
        <authorList>
            <person name="Ma J.F."/>
            <person name="Yamaji N."/>
            <person name="Mitani N."/>
            <person name="Xu X.Y."/>
            <person name="Su Y.H."/>
            <person name="McGrath S.P."/>
            <person name="Zhao F.J."/>
        </authorList>
    </citation>
    <scope>FUNCTION</scope>
</reference>
<reference key="12">
    <citation type="journal article" date="2009" name="Plant Physiol.">
        <title>The rice aquaporin Lsi1 mediates uptake of methylated arsenic species.</title>
        <authorList>
            <person name="Li R.Y."/>
            <person name="Ago Y."/>
            <person name="Liu W.J."/>
            <person name="Mitani N."/>
            <person name="Feldmann J."/>
            <person name="McGrath S.P."/>
            <person name="Ma J.F."/>
            <person name="Zhao F.J."/>
        </authorList>
    </citation>
    <scope>FUNCTION</scope>
</reference>